<proteinExistence type="inferred from homology"/>
<evidence type="ECO:0000255" key="1">
    <source>
        <dbReference type="HAMAP-Rule" id="MF_00318"/>
    </source>
</evidence>
<reference key="1">
    <citation type="submission" date="2007-10" db="EMBL/GenBank/DDBJ databases">
        <title>Genome sequence of Campylobacter concisus 13826 isolated from human feces.</title>
        <authorList>
            <person name="Fouts D.E."/>
            <person name="Mongodin E.F."/>
            <person name="Puiu D."/>
            <person name="Sebastian Y."/>
            <person name="Miller W.G."/>
            <person name="Mandrell R.E."/>
            <person name="On S."/>
            <person name="Nelson K.E."/>
        </authorList>
    </citation>
    <scope>NUCLEOTIDE SEQUENCE [LARGE SCALE GENOMIC DNA]</scope>
    <source>
        <strain>13826</strain>
    </source>
</reference>
<gene>
    <name evidence="1" type="primary">eno</name>
    <name type="ordered locus">Ccon26_17510</name>
    <name type="ORF">CCC13826_2093</name>
</gene>
<comment type="function">
    <text evidence="1">Catalyzes the reversible conversion of 2-phosphoglycerate (2-PG) into phosphoenolpyruvate (PEP). It is essential for the degradation of carbohydrates via glycolysis.</text>
</comment>
<comment type="catalytic activity">
    <reaction evidence="1">
        <text>(2R)-2-phosphoglycerate = phosphoenolpyruvate + H2O</text>
        <dbReference type="Rhea" id="RHEA:10164"/>
        <dbReference type="ChEBI" id="CHEBI:15377"/>
        <dbReference type="ChEBI" id="CHEBI:58289"/>
        <dbReference type="ChEBI" id="CHEBI:58702"/>
        <dbReference type="EC" id="4.2.1.11"/>
    </reaction>
</comment>
<comment type="cofactor">
    <cofactor evidence="1">
        <name>Mg(2+)</name>
        <dbReference type="ChEBI" id="CHEBI:18420"/>
    </cofactor>
    <text evidence="1">Binds a second Mg(2+) ion via substrate during catalysis.</text>
</comment>
<comment type="pathway">
    <text evidence="1">Carbohydrate degradation; glycolysis; pyruvate from D-glyceraldehyde 3-phosphate: step 4/5.</text>
</comment>
<comment type="subcellular location">
    <subcellularLocation>
        <location evidence="1">Cytoplasm</location>
    </subcellularLocation>
    <subcellularLocation>
        <location evidence="1">Secreted</location>
    </subcellularLocation>
    <subcellularLocation>
        <location evidence="1">Cell surface</location>
    </subcellularLocation>
    <text evidence="1">Fractions of enolase are present in both the cytoplasm and on the cell surface.</text>
</comment>
<comment type="similarity">
    <text evidence="1">Belongs to the enolase family.</text>
</comment>
<protein>
    <recommendedName>
        <fullName evidence="1">Enolase</fullName>
        <ecNumber evidence="1">4.2.1.11</ecNumber>
    </recommendedName>
    <alternativeName>
        <fullName evidence="1">2-phospho-D-glycerate hydro-lyase</fullName>
    </alternativeName>
    <alternativeName>
        <fullName evidence="1">2-phosphoglycerate dehydratase</fullName>
    </alternativeName>
</protein>
<keyword id="KW-0963">Cytoplasm</keyword>
<keyword id="KW-0324">Glycolysis</keyword>
<keyword id="KW-0456">Lyase</keyword>
<keyword id="KW-0460">Magnesium</keyword>
<keyword id="KW-0479">Metal-binding</keyword>
<keyword id="KW-0964">Secreted</keyword>
<dbReference type="EC" id="4.2.1.11" evidence="1"/>
<dbReference type="EMBL" id="CP000792">
    <property type="protein sequence ID" value="EAT98426.1"/>
    <property type="molecule type" value="Genomic_DNA"/>
</dbReference>
<dbReference type="RefSeq" id="WP_012140455.1">
    <property type="nucleotide sequence ID" value="NC_009802.2"/>
</dbReference>
<dbReference type="SMR" id="A7ZFN1"/>
<dbReference type="STRING" id="360104.CCC13826_2093"/>
<dbReference type="KEGG" id="cco:CCC13826_2093"/>
<dbReference type="eggNOG" id="COG0148">
    <property type="taxonomic scope" value="Bacteria"/>
</dbReference>
<dbReference type="HOGENOM" id="CLU_031223_2_1_7"/>
<dbReference type="OrthoDB" id="9804716at2"/>
<dbReference type="UniPathway" id="UPA00109">
    <property type="reaction ID" value="UER00187"/>
</dbReference>
<dbReference type="Proteomes" id="UP000001121">
    <property type="component" value="Chromosome"/>
</dbReference>
<dbReference type="GO" id="GO:0009986">
    <property type="term" value="C:cell surface"/>
    <property type="evidence" value="ECO:0007669"/>
    <property type="project" value="UniProtKB-SubCell"/>
</dbReference>
<dbReference type="GO" id="GO:0005576">
    <property type="term" value="C:extracellular region"/>
    <property type="evidence" value="ECO:0007669"/>
    <property type="project" value="UniProtKB-SubCell"/>
</dbReference>
<dbReference type="GO" id="GO:0000015">
    <property type="term" value="C:phosphopyruvate hydratase complex"/>
    <property type="evidence" value="ECO:0007669"/>
    <property type="project" value="InterPro"/>
</dbReference>
<dbReference type="GO" id="GO:0000287">
    <property type="term" value="F:magnesium ion binding"/>
    <property type="evidence" value="ECO:0007669"/>
    <property type="project" value="UniProtKB-UniRule"/>
</dbReference>
<dbReference type="GO" id="GO:0004634">
    <property type="term" value="F:phosphopyruvate hydratase activity"/>
    <property type="evidence" value="ECO:0007669"/>
    <property type="project" value="UniProtKB-UniRule"/>
</dbReference>
<dbReference type="GO" id="GO:0006096">
    <property type="term" value="P:glycolytic process"/>
    <property type="evidence" value="ECO:0007669"/>
    <property type="project" value="UniProtKB-UniRule"/>
</dbReference>
<dbReference type="CDD" id="cd03313">
    <property type="entry name" value="enolase"/>
    <property type="match status" value="1"/>
</dbReference>
<dbReference type="FunFam" id="3.30.390.10:FF:000001">
    <property type="entry name" value="Enolase"/>
    <property type="match status" value="1"/>
</dbReference>
<dbReference type="Gene3D" id="3.20.20.120">
    <property type="entry name" value="Enolase-like C-terminal domain"/>
    <property type="match status" value="1"/>
</dbReference>
<dbReference type="Gene3D" id="3.30.390.10">
    <property type="entry name" value="Enolase-like, N-terminal domain"/>
    <property type="match status" value="1"/>
</dbReference>
<dbReference type="HAMAP" id="MF_00318">
    <property type="entry name" value="Enolase"/>
    <property type="match status" value="1"/>
</dbReference>
<dbReference type="InterPro" id="IPR000941">
    <property type="entry name" value="Enolase"/>
</dbReference>
<dbReference type="InterPro" id="IPR036849">
    <property type="entry name" value="Enolase-like_C_sf"/>
</dbReference>
<dbReference type="InterPro" id="IPR029017">
    <property type="entry name" value="Enolase-like_N"/>
</dbReference>
<dbReference type="InterPro" id="IPR020810">
    <property type="entry name" value="Enolase_C"/>
</dbReference>
<dbReference type="InterPro" id="IPR020809">
    <property type="entry name" value="Enolase_CS"/>
</dbReference>
<dbReference type="InterPro" id="IPR020811">
    <property type="entry name" value="Enolase_N"/>
</dbReference>
<dbReference type="NCBIfam" id="TIGR01060">
    <property type="entry name" value="eno"/>
    <property type="match status" value="1"/>
</dbReference>
<dbReference type="PANTHER" id="PTHR11902">
    <property type="entry name" value="ENOLASE"/>
    <property type="match status" value="1"/>
</dbReference>
<dbReference type="PANTHER" id="PTHR11902:SF1">
    <property type="entry name" value="ENOLASE"/>
    <property type="match status" value="1"/>
</dbReference>
<dbReference type="Pfam" id="PF00113">
    <property type="entry name" value="Enolase_C"/>
    <property type="match status" value="1"/>
</dbReference>
<dbReference type="Pfam" id="PF03952">
    <property type="entry name" value="Enolase_N"/>
    <property type="match status" value="1"/>
</dbReference>
<dbReference type="PIRSF" id="PIRSF001400">
    <property type="entry name" value="Enolase"/>
    <property type="match status" value="1"/>
</dbReference>
<dbReference type="PRINTS" id="PR00148">
    <property type="entry name" value="ENOLASE"/>
</dbReference>
<dbReference type="SFLD" id="SFLDS00001">
    <property type="entry name" value="Enolase"/>
    <property type="match status" value="1"/>
</dbReference>
<dbReference type="SFLD" id="SFLDF00002">
    <property type="entry name" value="enolase"/>
    <property type="match status" value="1"/>
</dbReference>
<dbReference type="SMART" id="SM01192">
    <property type="entry name" value="Enolase_C"/>
    <property type="match status" value="1"/>
</dbReference>
<dbReference type="SMART" id="SM01193">
    <property type="entry name" value="Enolase_N"/>
    <property type="match status" value="1"/>
</dbReference>
<dbReference type="SUPFAM" id="SSF51604">
    <property type="entry name" value="Enolase C-terminal domain-like"/>
    <property type="match status" value="1"/>
</dbReference>
<dbReference type="SUPFAM" id="SSF54826">
    <property type="entry name" value="Enolase N-terminal domain-like"/>
    <property type="match status" value="1"/>
</dbReference>
<dbReference type="PROSITE" id="PS00164">
    <property type="entry name" value="ENOLASE"/>
    <property type="match status" value="1"/>
</dbReference>
<accession>A7ZFN1</accession>
<sequence length="416" mass="45175">MVFIEDVEAHEVLDSRGNPTVRATVRLSDGTEASAIVPSGASTGKREALELRDKDDRYAGKGVLKAVSNVNEKIAEAVIGLDAYNQKAVDAEMLELDGTHNYSNLGANAVLGVSMAVARAAAKSLNIPLYRYLGGANASILPVPMFNIINGGAHANNSVDFQEFMIMPFGFSTFSEALRAATEIYHKLKSILNAAGHSTAVGDEGGFAPNLKDNEEPLKLISQAVKEAGYELGSQIKLALDVASSELYKDGKYELEGKKFSSAELISYYEKLCEKYPIFSIEDGLSEDDWSGWAELTKRLGSKVQLVGDDLFVTNEKILREGIEKNIANAILIKPNQIGSVTQTMQTVRLAQRNGYRCIMSHRSGESEDAFIADFAVALNTGEIKTGATSRSERNAKYNRLLEIELEAGEFLGDNI</sequence>
<name>ENO_CAMC1</name>
<feature type="chain" id="PRO_1000019198" description="Enolase">
    <location>
        <begin position="1"/>
        <end position="416"/>
    </location>
</feature>
<feature type="active site" description="Proton donor" evidence="1">
    <location>
        <position position="204"/>
    </location>
</feature>
<feature type="active site" description="Proton acceptor" evidence="1">
    <location>
        <position position="334"/>
    </location>
</feature>
<feature type="binding site" evidence="1">
    <location>
        <position position="162"/>
    </location>
    <ligand>
        <name>(2R)-2-phosphoglycerate</name>
        <dbReference type="ChEBI" id="CHEBI:58289"/>
    </ligand>
</feature>
<feature type="binding site" evidence="1">
    <location>
        <position position="241"/>
    </location>
    <ligand>
        <name>Mg(2+)</name>
        <dbReference type="ChEBI" id="CHEBI:18420"/>
    </ligand>
</feature>
<feature type="binding site" evidence="1">
    <location>
        <position position="282"/>
    </location>
    <ligand>
        <name>Mg(2+)</name>
        <dbReference type="ChEBI" id="CHEBI:18420"/>
    </ligand>
</feature>
<feature type="binding site" evidence="1">
    <location>
        <position position="309"/>
    </location>
    <ligand>
        <name>Mg(2+)</name>
        <dbReference type="ChEBI" id="CHEBI:18420"/>
    </ligand>
</feature>
<feature type="binding site" evidence="1">
    <location>
        <position position="334"/>
    </location>
    <ligand>
        <name>(2R)-2-phosphoglycerate</name>
        <dbReference type="ChEBI" id="CHEBI:58289"/>
    </ligand>
</feature>
<feature type="binding site" evidence="1">
    <location>
        <position position="363"/>
    </location>
    <ligand>
        <name>(2R)-2-phosphoglycerate</name>
        <dbReference type="ChEBI" id="CHEBI:58289"/>
    </ligand>
</feature>
<feature type="binding site" evidence="1">
    <location>
        <position position="364"/>
    </location>
    <ligand>
        <name>(2R)-2-phosphoglycerate</name>
        <dbReference type="ChEBI" id="CHEBI:58289"/>
    </ligand>
</feature>
<feature type="binding site" evidence="1">
    <location>
        <position position="385"/>
    </location>
    <ligand>
        <name>(2R)-2-phosphoglycerate</name>
        <dbReference type="ChEBI" id="CHEBI:58289"/>
    </ligand>
</feature>
<organism>
    <name type="scientific">Campylobacter concisus (strain 13826)</name>
    <dbReference type="NCBI Taxonomy" id="360104"/>
    <lineage>
        <taxon>Bacteria</taxon>
        <taxon>Pseudomonadati</taxon>
        <taxon>Campylobacterota</taxon>
        <taxon>Epsilonproteobacteria</taxon>
        <taxon>Campylobacterales</taxon>
        <taxon>Campylobacteraceae</taxon>
        <taxon>Campylobacter</taxon>
    </lineage>
</organism>